<protein>
    <recommendedName>
        <fullName>Aprataxin-like protein</fullName>
        <ecNumber evidence="5 6">3.6.1.71</ecNumber>
        <ecNumber evidence="2">3.6.1.72</ecNumber>
    </recommendedName>
    <alternativeName>
        <fullName>Hit family protein 3</fullName>
    </alternativeName>
</protein>
<keyword id="KW-0963">Cytoplasm</keyword>
<keyword id="KW-0227">DNA damage</keyword>
<keyword id="KW-0234">DNA repair</keyword>
<keyword id="KW-0238">DNA-binding</keyword>
<keyword id="KW-0378">Hydrolase</keyword>
<keyword id="KW-0479">Metal-binding</keyword>
<keyword id="KW-0539">Nucleus</keyword>
<keyword id="KW-1185">Reference proteome</keyword>
<keyword id="KW-0862">Zinc</keyword>
<proteinExistence type="evidence at protein level"/>
<reference key="1">
    <citation type="journal article" date="1986" name="Proc. Natl. Acad. Sci. U.S.A.">
        <title>Yeast gene required for spindle pole body duplication: homology of its product with Ca2+-binding proteins.</title>
        <authorList>
            <person name="Baum P."/>
            <person name="Furlong C."/>
            <person name="Byers B."/>
        </authorList>
    </citation>
    <scope>NUCLEOTIDE SEQUENCE [GENOMIC DNA]</scope>
    <source>
        <strain>ATCC 204510 / AB320</strain>
    </source>
</reference>
<reference key="2">
    <citation type="journal article" date="1997" name="Yeast">
        <title>Sequencing analysis of a 36.8 kb fragment of yeast chromosome XV reveals 26 open reading frames including SEC63, CDC31, SUG2, GCD1, RBL2, PNT1, PAC1 and VPH1.</title>
        <authorList>
            <person name="Poirey R."/>
            <person name="Jauniaux J.-C."/>
        </authorList>
    </citation>
    <scope>NUCLEOTIDE SEQUENCE [GENOMIC DNA]</scope>
    <source>
        <strain>ATCC 96604 / S288c / FY1679</strain>
    </source>
</reference>
<reference key="3">
    <citation type="journal article" date="1997" name="Nature">
        <title>The nucleotide sequence of Saccharomyces cerevisiae chromosome XV.</title>
        <authorList>
            <person name="Dujon B."/>
            <person name="Albermann K."/>
            <person name="Aldea M."/>
            <person name="Alexandraki D."/>
            <person name="Ansorge W."/>
            <person name="Arino J."/>
            <person name="Benes V."/>
            <person name="Bohn C."/>
            <person name="Bolotin-Fukuhara M."/>
            <person name="Bordonne R."/>
            <person name="Boyer J."/>
            <person name="Camasses A."/>
            <person name="Casamayor A."/>
            <person name="Casas C."/>
            <person name="Cheret G."/>
            <person name="Cziepluch C."/>
            <person name="Daignan-Fornier B."/>
            <person name="Dang V.-D."/>
            <person name="de Haan M."/>
            <person name="Delius H."/>
            <person name="Durand P."/>
            <person name="Fairhead C."/>
            <person name="Feldmann H."/>
            <person name="Gaillon L."/>
            <person name="Galisson F."/>
            <person name="Gamo F.-J."/>
            <person name="Gancedo C."/>
            <person name="Goffeau A."/>
            <person name="Goulding S.E."/>
            <person name="Grivell L.A."/>
            <person name="Habbig B."/>
            <person name="Hand N.J."/>
            <person name="Hani J."/>
            <person name="Hattenhorst U."/>
            <person name="Hebling U."/>
            <person name="Hernando Y."/>
            <person name="Herrero E."/>
            <person name="Heumann K."/>
            <person name="Hiesel R."/>
            <person name="Hilger F."/>
            <person name="Hofmann B."/>
            <person name="Hollenberg C.P."/>
            <person name="Hughes B."/>
            <person name="Jauniaux J.-C."/>
            <person name="Kalogeropoulos A."/>
            <person name="Katsoulou C."/>
            <person name="Kordes E."/>
            <person name="Lafuente M.J."/>
            <person name="Landt O."/>
            <person name="Louis E.J."/>
            <person name="Maarse A.C."/>
            <person name="Madania A."/>
            <person name="Mannhaupt G."/>
            <person name="Marck C."/>
            <person name="Martin R.P."/>
            <person name="Mewes H.-W."/>
            <person name="Michaux G."/>
            <person name="Paces V."/>
            <person name="Parle-McDermott A.G."/>
            <person name="Pearson B.M."/>
            <person name="Perrin A."/>
            <person name="Pettersson B."/>
            <person name="Poch O."/>
            <person name="Pohl T.M."/>
            <person name="Poirey R."/>
            <person name="Portetelle D."/>
            <person name="Pujol A."/>
            <person name="Purnelle B."/>
            <person name="Ramezani Rad M."/>
            <person name="Rechmann S."/>
            <person name="Schwager C."/>
            <person name="Schweizer M."/>
            <person name="Sor F."/>
            <person name="Sterky F."/>
            <person name="Tarassov I.A."/>
            <person name="Teodoru C."/>
            <person name="Tettelin H."/>
            <person name="Thierry A."/>
            <person name="Tobiasch E."/>
            <person name="Tzermia M."/>
            <person name="Uhlen M."/>
            <person name="Unseld M."/>
            <person name="Valens M."/>
            <person name="Vandenbol M."/>
            <person name="Vetter I."/>
            <person name="Vlcek C."/>
            <person name="Voet M."/>
            <person name="Volckaert G."/>
            <person name="Voss H."/>
            <person name="Wambutt R."/>
            <person name="Wedler H."/>
            <person name="Wiemann S."/>
            <person name="Winsor B."/>
            <person name="Wolfe K.H."/>
            <person name="Zollner A."/>
            <person name="Zumstein E."/>
            <person name="Kleine K."/>
        </authorList>
    </citation>
    <scope>NUCLEOTIDE SEQUENCE [LARGE SCALE GENOMIC DNA]</scope>
    <source>
        <strain>ATCC 204508 / S288c</strain>
    </source>
</reference>
<reference key="4">
    <citation type="journal article" date="2014" name="G3 (Bethesda)">
        <title>The reference genome sequence of Saccharomyces cerevisiae: Then and now.</title>
        <authorList>
            <person name="Engel S.R."/>
            <person name="Dietrich F.S."/>
            <person name="Fisk D.G."/>
            <person name="Binkley G."/>
            <person name="Balakrishnan R."/>
            <person name="Costanzo M.C."/>
            <person name="Dwight S.S."/>
            <person name="Hitz B.C."/>
            <person name="Karra K."/>
            <person name="Nash R.S."/>
            <person name="Weng S."/>
            <person name="Wong E.D."/>
            <person name="Lloyd P."/>
            <person name="Skrzypek M.S."/>
            <person name="Miyasato S.R."/>
            <person name="Simison M."/>
            <person name="Cherry J.M."/>
        </authorList>
    </citation>
    <scope>GENOME REANNOTATION</scope>
    <source>
        <strain>ATCC 204508 / S288c</strain>
    </source>
</reference>
<reference key="5">
    <citation type="journal article" date="2003" name="Nature">
        <title>Global analysis of protein localization in budding yeast.</title>
        <authorList>
            <person name="Huh W.-K."/>
            <person name="Falvo J.V."/>
            <person name="Gerke L.C."/>
            <person name="Carroll A.S."/>
            <person name="Howson R.W."/>
            <person name="Weissman J.S."/>
            <person name="O'Shea E.K."/>
        </authorList>
    </citation>
    <scope>SUBCELLULAR LOCATION [LARGE SCALE ANALYSIS]</scope>
</reference>
<reference key="6">
    <citation type="journal article" date="2003" name="Nature">
        <title>Global analysis of protein expression in yeast.</title>
        <authorList>
            <person name="Ghaemmaghami S."/>
            <person name="Huh W.-K."/>
            <person name="Bower K."/>
            <person name="Howson R.W."/>
            <person name="Belle A."/>
            <person name="Dephoure N."/>
            <person name="O'Shea E.K."/>
            <person name="Weissman J.S."/>
        </authorList>
    </citation>
    <scope>LEVEL OF PROTEIN EXPRESSION [LARGE SCALE ANALYSIS]</scope>
</reference>
<reference key="7">
    <citation type="journal article" date="2006" name="J. Biol. Chem.">
        <title>Aprataxin forms a discrete branch in the HIT (histidine triad) superfamily of proteins with both DNA/RNA binding and nucleotide hydrolase activities.</title>
        <authorList>
            <person name="Kijas A.W."/>
            <person name="Harris J.L."/>
            <person name="Harris J.M."/>
            <person name="Lavin M.F."/>
        </authorList>
    </citation>
    <scope>IDENTIFICATION</scope>
</reference>
<reference key="8">
    <citation type="journal article" date="2006" name="Nature">
        <title>The neurodegenerative disease protein aprataxin resolves abortive DNA ligation intermediates.</title>
        <authorList>
            <person name="Ahel I."/>
            <person name="Rass U."/>
            <person name="El-Khamisy S.F."/>
            <person name="Katyal S."/>
            <person name="Clements P.M."/>
            <person name="McKinnon P.J."/>
            <person name="Caldecott K.W."/>
            <person name="West S.C."/>
        </authorList>
    </citation>
    <scope>FUNCTION</scope>
    <scope>CATALYTIC ACTIVITY</scope>
</reference>
<reference key="9">
    <citation type="journal article" date="2014" name="Nature">
        <title>Aprataxin resolves adenylated RNA-DNA junctions to maintain genome integrity.</title>
        <authorList>
            <person name="Tumbale P."/>
            <person name="Williams J.S."/>
            <person name="Schellenberg M.J."/>
            <person name="Kunkel T.A."/>
            <person name="Williams R.S."/>
        </authorList>
    </citation>
    <scope>FUNCTION</scope>
    <scope>CATALYTIC ACTIVITY</scope>
</reference>
<comment type="function">
    <text evidence="2 5 6">DNA-binding protein involved in single-strand DNA break repair, double-strand DNA break repair and base excision repair. Resolves abortive DNA ligation intermediates formed either at base excision sites, or when DNA ligases attempt to repair non-ligatable breaks induced by reactive oxygen species. Catalyzes the release of adenylate groups covalently linked to 5'-phosphate termini, resulting in the production of 5'-phosphate termini that can be efficiently rejoined (PubMed:16964241, PubMed:24362567). Likewise, catalyzes the release of 3'-linked guanosine (DNAppG) and inosine (DNAppI) from DNA, but has higher specific activity with 5'-linked adenosine (AppDNA) (By similarity).</text>
</comment>
<comment type="catalytic activity">
    <reaction evidence="5 6">
        <text>a 5'-end adenosine-5'-diphospho-5'-2'-deoxyribonucleoside-DNA + H2O = a 5'-end 5'-phospho-2'-deoxyribonucleoside-DNA + AMP + 2 H(+)</text>
        <dbReference type="Rhea" id="RHEA:52128"/>
        <dbReference type="Rhea" id="RHEA-COMP:13180"/>
        <dbReference type="Rhea" id="RHEA-COMP:13181"/>
        <dbReference type="ChEBI" id="CHEBI:15377"/>
        <dbReference type="ChEBI" id="CHEBI:15378"/>
        <dbReference type="ChEBI" id="CHEBI:136412"/>
        <dbReference type="ChEBI" id="CHEBI:136413"/>
        <dbReference type="ChEBI" id="CHEBI:456215"/>
        <dbReference type="EC" id="3.6.1.71"/>
    </reaction>
</comment>
<comment type="catalytic activity">
    <reaction evidence="5 6">
        <text>a 5'-end adenosine-5'-diphospho-5'-ribonucleoside-2'-deoxyribonucleotide-DNA + H2O = a 5'-end 5'-phospho-ribonucleoside-2'-deoxyribonucleotide-DNA + AMP + 2 H(+)</text>
        <dbReference type="Rhea" id="RHEA:52132"/>
        <dbReference type="Rhea" id="RHEA-COMP:13182"/>
        <dbReference type="Rhea" id="RHEA-COMP:13183"/>
        <dbReference type="ChEBI" id="CHEBI:15377"/>
        <dbReference type="ChEBI" id="CHEBI:15378"/>
        <dbReference type="ChEBI" id="CHEBI:136414"/>
        <dbReference type="ChEBI" id="CHEBI:136415"/>
        <dbReference type="ChEBI" id="CHEBI:456215"/>
        <dbReference type="EC" id="3.6.1.71"/>
    </reaction>
</comment>
<comment type="catalytic activity">
    <reaction evidence="2">
        <text>a 3'-end 2'-deoxyribonucleotide-3'-diphospho-5'-guanosine-DNA + H2O = a 3'-end 2'-deoxyribonucleotide 3'-phosphate-DNA + GMP + 2 H(+)</text>
        <dbReference type="Rhea" id="RHEA:52140"/>
        <dbReference type="Rhea" id="RHEA-COMP:13186"/>
        <dbReference type="Rhea" id="RHEA-COMP:13187"/>
        <dbReference type="ChEBI" id="CHEBI:15377"/>
        <dbReference type="ChEBI" id="CHEBI:15378"/>
        <dbReference type="ChEBI" id="CHEBI:58115"/>
        <dbReference type="ChEBI" id="CHEBI:136419"/>
        <dbReference type="ChEBI" id="CHEBI:136420"/>
        <dbReference type="EC" id="3.6.1.72"/>
    </reaction>
</comment>
<comment type="subcellular location">
    <subcellularLocation>
        <location evidence="3">Nucleus</location>
    </subcellularLocation>
    <subcellularLocation>
        <location evidence="3">Cytoplasm</location>
    </subcellularLocation>
</comment>
<comment type="domain">
    <text evidence="1">The HIT domain is required for enzymatic activity.</text>
</comment>
<comment type="miscellaneous">
    <text evidence="4">Present with 396 molecules/cell in log phase SD medium.</text>
</comment>
<evidence type="ECO:0000250" key="1"/>
<evidence type="ECO:0000250" key="2">
    <source>
        <dbReference type="UniProtKB" id="O74859"/>
    </source>
</evidence>
<evidence type="ECO:0000269" key="3">
    <source>
    </source>
</evidence>
<evidence type="ECO:0000269" key="4">
    <source>
    </source>
</evidence>
<evidence type="ECO:0000269" key="5">
    <source>
    </source>
</evidence>
<evidence type="ECO:0000269" key="6">
    <source>
    </source>
</evidence>
<evidence type="ECO:0000305" key="7"/>
<sequence>MSWRYALKNYVTSPETVNDDTVTYFDDKVSIIRDSFPKSECHLLILPRTMQLSRSHPTKVIDAKFKNEFESYVNSAIDHIFRHFQEKFRIKKSDDDKDPCWDDILKDKNKFVRNFVQVGIHSVPSMANLHIHVISKDFHSVRLKNKKHYNSFNTGFFISWDDLPLNGKNLGTDKEIETTYLKEHDLLCCYCQRNFSNKFSLLKKHLELEFNSHFELK</sequence>
<accession>Q08702</accession>
<accession>D6W2V9</accession>
<accession>Q05189</accession>
<feature type="chain" id="PRO_0000109802" description="Aprataxin-like protein">
    <location>
        <begin position="1"/>
        <end position="217"/>
    </location>
</feature>
<feature type="domain" description="HIT">
    <location>
        <begin position="6"/>
        <end position="139"/>
    </location>
</feature>
<feature type="region of interest" description="Interaction with DNA" evidence="2">
    <location>
        <begin position="34"/>
        <end position="38"/>
    </location>
</feature>
<feature type="region of interest" description="Interaction with DNA" evidence="2">
    <location>
        <begin position="121"/>
        <end position="132"/>
    </location>
</feature>
<feature type="region of interest" description="Interaction with DNA" evidence="2">
    <location>
        <begin position="144"/>
        <end position="148"/>
    </location>
</feature>
<feature type="active site" description="Nucleophile" evidence="2">
    <location>
        <position position="130"/>
    </location>
</feature>
<feature type="binding site" evidence="2">
    <location>
        <position position="188"/>
    </location>
    <ligand>
        <name>Zn(2+)</name>
        <dbReference type="ChEBI" id="CHEBI:29105"/>
    </ligand>
</feature>
<feature type="binding site" evidence="2">
    <location>
        <position position="191"/>
    </location>
    <ligand>
        <name>Zn(2+)</name>
        <dbReference type="ChEBI" id="CHEBI:29105"/>
    </ligand>
</feature>
<feature type="binding site" evidence="2">
    <location>
        <position position="205"/>
    </location>
    <ligand>
        <name>Zn(2+)</name>
        <dbReference type="ChEBI" id="CHEBI:29105"/>
    </ligand>
</feature>
<feature type="binding site" evidence="2">
    <location>
        <position position="209"/>
    </location>
    <ligand>
        <name>Zn(2+)</name>
        <dbReference type="ChEBI" id="CHEBI:29105"/>
    </ligand>
</feature>
<feature type="site" description="Interaction with DNA" evidence="2">
    <location>
        <position position="10"/>
    </location>
</feature>
<feature type="sequence conflict" description="In Ref. 1; AAA66894." evidence="7" ref="1">
    <original>I</original>
    <variation>S</variation>
    <location>
        <position position="80"/>
    </location>
</feature>
<feature type="sequence conflict" description="In Ref. 1; AAA66894." evidence="7" ref="1">
    <original>F</original>
    <variation>N</variation>
    <location>
        <position position="157"/>
    </location>
</feature>
<name>APTX_YEAST</name>
<gene>
    <name type="primary">HNT3</name>
    <name type="ordered locus">YOR258W</name>
</gene>
<dbReference type="EC" id="3.6.1.71" evidence="5 6"/>
<dbReference type="EC" id="3.6.1.72" evidence="2"/>
<dbReference type="EMBL" id="M14078">
    <property type="protein sequence ID" value="AAA66894.1"/>
    <property type="molecule type" value="Genomic_DNA"/>
</dbReference>
<dbReference type="EMBL" id="Z75166">
    <property type="protein sequence ID" value="CAA99480.1"/>
    <property type="molecule type" value="Genomic_DNA"/>
</dbReference>
<dbReference type="EMBL" id="BK006948">
    <property type="protein sequence ID" value="DAA11025.1"/>
    <property type="molecule type" value="Genomic_DNA"/>
</dbReference>
<dbReference type="PIR" id="S67155">
    <property type="entry name" value="S67155"/>
</dbReference>
<dbReference type="RefSeq" id="NP_014901.1">
    <property type="nucleotide sequence ID" value="NM_001183677.1"/>
</dbReference>
<dbReference type="SMR" id="Q08702"/>
<dbReference type="BioGRID" id="34648">
    <property type="interactions" value="28"/>
</dbReference>
<dbReference type="DIP" id="DIP-5388N"/>
<dbReference type="FunCoup" id="Q08702">
    <property type="interactions" value="84"/>
</dbReference>
<dbReference type="IntAct" id="Q08702">
    <property type="interactions" value="2"/>
</dbReference>
<dbReference type="STRING" id="4932.YOR258W"/>
<dbReference type="PaxDb" id="4932-YOR258W"/>
<dbReference type="PeptideAtlas" id="Q08702"/>
<dbReference type="EnsemblFungi" id="YOR258W_mRNA">
    <property type="protein sequence ID" value="YOR258W"/>
    <property type="gene ID" value="YOR258W"/>
</dbReference>
<dbReference type="GeneID" id="854432"/>
<dbReference type="KEGG" id="sce:YOR258W"/>
<dbReference type="AGR" id="SGD:S000005784"/>
<dbReference type="SGD" id="S000005784">
    <property type="gene designation" value="HNT3"/>
</dbReference>
<dbReference type="VEuPathDB" id="FungiDB:YOR258W"/>
<dbReference type="eggNOG" id="KOG0562">
    <property type="taxonomic scope" value="Eukaryota"/>
</dbReference>
<dbReference type="GeneTree" id="ENSGT00940000156806"/>
<dbReference type="HOGENOM" id="CLU_066882_3_1_1"/>
<dbReference type="InParanoid" id="Q08702"/>
<dbReference type="OMA" id="IHDMFPK"/>
<dbReference type="OrthoDB" id="3512845at2759"/>
<dbReference type="BioCyc" id="YEAST:G3O-33749-MONOMER"/>
<dbReference type="BRENDA" id="3.1.11.7">
    <property type="organism ID" value="984"/>
</dbReference>
<dbReference type="BRENDA" id="3.6.1.71">
    <property type="organism ID" value="984"/>
</dbReference>
<dbReference type="BioGRID-ORCS" id="854432">
    <property type="hits" value="3 hits in 10 CRISPR screens"/>
</dbReference>
<dbReference type="PRO" id="PR:Q08702"/>
<dbReference type="Proteomes" id="UP000002311">
    <property type="component" value="Chromosome XV"/>
</dbReference>
<dbReference type="RNAct" id="Q08702">
    <property type="molecule type" value="protein"/>
</dbReference>
<dbReference type="GO" id="GO:0005737">
    <property type="term" value="C:cytoplasm"/>
    <property type="evidence" value="ECO:0007005"/>
    <property type="project" value="SGD"/>
</dbReference>
<dbReference type="GO" id="GO:0005634">
    <property type="term" value="C:nucleus"/>
    <property type="evidence" value="ECO:0007005"/>
    <property type="project" value="SGD"/>
</dbReference>
<dbReference type="GO" id="GO:0033699">
    <property type="term" value="F:DNA 5'-adenosine monophosphate hydrolase activity"/>
    <property type="evidence" value="ECO:0000314"/>
    <property type="project" value="UniProtKB"/>
</dbReference>
<dbReference type="GO" id="GO:0120108">
    <property type="term" value="F:DNA-3'-diphospho-5'-guanosine diphosphatase"/>
    <property type="evidence" value="ECO:0007669"/>
    <property type="project" value="UniProtKB-EC"/>
</dbReference>
<dbReference type="GO" id="GO:0003725">
    <property type="term" value="F:double-stranded RNA binding"/>
    <property type="evidence" value="ECO:0000318"/>
    <property type="project" value="GO_Central"/>
</dbReference>
<dbReference type="GO" id="GO:0046872">
    <property type="term" value="F:metal ion binding"/>
    <property type="evidence" value="ECO:0007669"/>
    <property type="project" value="UniProtKB-KW"/>
</dbReference>
<dbReference type="GO" id="GO:0030983">
    <property type="term" value="F:mismatched DNA binding"/>
    <property type="evidence" value="ECO:0000318"/>
    <property type="project" value="GO_Central"/>
</dbReference>
<dbReference type="GO" id="GO:1990165">
    <property type="term" value="F:single-strand break-containing DNA binding"/>
    <property type="evidence" value="ECO:0000318"/>
    <property type="project" value="GO_Central"/>
</dbReference>
<dbReference type="GO" id="GO:0003697">
    <property type="term" value="F:single-stranded DNA binding"/>
    <property type="evidence" value="ECO:0000318"/>
    <property type="project" value="GO_Central"/>
</dbReference>
<dbReference type="GO" id="GO:0006974">
    <property type="term" value="P:DNA damage response"/>
    <property type="evidence" value="ECO:0000315"/>
    <property type="project" value="SGD"/>
</dbReference>
<dbReference type="GO" id="GO:0000012">
    <property type="term" value="P:single strand break repair"/>
    <property type="evidence" value="ECO:0000318"/>
    <property type="project" value="GO_Central"/>
</dbReference>
<dbReference type="FunFam" id="3.30.428.10:FF:000017">
    <property type="entry name" value="Aprataxin-like protein"/>
    <property type="match status" value="1"/>
</dbReference>
<dbReference type="Gene3D" id="3.30.428.10">
    <property type="entry name" value="HIT-like"/>
    <property type="match status" value="1"/>
</dbReference>
<dbReference type="InterPro" id="IPR011146">
    <property type="entry name" value="HIT-like"/>
</dbReference>
<dbReference type="InterPro" id="IPR036265">
    <property type="entry name" value="HIT-like_sf"/>
</dbReference>
<dbReference type="InterPro" id="IPR032566">
    <property type="entry name" value="Znf-C2HE"/>
</dbReference>
<dbReference type="PANTHER" id="PTHR12486:SF4">
    <property type="entry name" value="APRATAXIN"/>
    <property type="match status" value="1"/>
</dbReference>
<dbReference type="PANTHER" id="PTHR12486">
    <property type="entry name" value="APRATAXIN-RELATED"/>
    <property type="match status" value="1"/>
</dbReference>
<dbReference type="Pfam" id="PF01230">
    <property type="entry name" value="HIT"/>
    <property type="match status" value="1"/>
</dbReference>
<dbReference type="Pfam" id="PF16278">
    <property type="entry name" value="zf-C2HE"/>
    <property type="match status" value="1"/>
</dbReference>
<dbReference type="SUPFAM" id="SSF54197">
    <property type="entry name" value="HIT-like"/>
    <property type="match status" value="1"/>
</dbReference>
<organism>
    <name type="scientific">Saccharomyces cerevisiae (strain ATCC 204508 / S288c)</name>
    <name type="common">Baker's yeast</name>
    <dbReference type="NCBI Taxonomy" id="559292"/>
    <lineage>
        <taxon>Eukaryota</taxon>
        <taxon>Fungi</taxon>
        <taxon>Dikarya</taxon>
        <taxon>Ascomycota</taxon>
        <taxon>Saccharomycotina</taxon>
        <taxon>Saccharomycetes</taxon>
        <taxon>Saccharomycetales</taxon>
        <taxon>Saccharomycetaceae</taxon>
        <taxon>Saccharomyces</taxon>
    </lineage>
</organism>